<proteinExistence type="inferred from homology"/>
<name>CYSQ_BUCAI</name>
<comment type="function">
    <text evidence="1">Converts adenosine-3',5'-bisphosphate (PAP) to AMP.</text>
</comment>
<comment type="catalytic activity">
    <reaction evidence="1">
        <text>adenosine 3',5'-bisphosphate + H2O = AMP + phosphate</text>
        <dbReference type="Rhea" id="RHEA:10040"/>
        <dbReference type="ChEBI" id="CHEBI:15377"/>
        <dbReference type="ChEBI" id="CHEBI:43474"/>
        <dbReference type="ChEBI" id="CHEBI:58343"/>
        <dbReference type="ChEBI" id="CHEBI:456215"/>
        <dbReference type="EC" id="3.1.3.7"/>
    </reaction>
</comment>
<comment type="cofactor">
    <cofactor evidence="1">
        <name>Mg(2+)</name>
        <dbReference type="ChEBI" id="CHEBI:18420"/>
    </cofactor>
</comment>
<comment type="subcellular location">
    <subcellularLocation>
        <location evidence="1">Cell inner membrane</location>
        <topology evidence="1">Peripheral membrane protein</topology>
        <orientation evidence="1">Cytoplasmic side</orientation>
    </subcellularLocation>
</comment>
<comment type="similarity">
    <text evidence="1 2">Belongs to the inositol monophosphatase superfamily. CysQ family.</text>
</comment>
<evidence type="ECO:0000255" key="1">
    <source>
        <dbReference type="HAMAP-Rule" id="MF_02095"/>
    </source>
</evidence>
<evidence type="ECO:0000305" key="2"/>
<feature type="chain" id="PRO_0000142548" description="3'(2'),5'-bisphosphate nucleotidase CysQ">
    <location>
        <begin position="1"/>
        <end position="265"/>
    </location>
</feature>
<feature type="binding site" evidence="1">
    <location>
        <position position="80"/>
    </location>
    <ligand>
        <name>Mg(2+)</name>
        <dbReference type="ChEBI" id="CHEBI:18420"/>
        <label>1</label>
    </ligand>
</feature>
<feature type="binding site" evidence="1">
    <location>
        <position position="80"/>
    </location>
    <ligand>
        <name>substrate</name>
    </ligand>
</feature>
<feature type="binding site" evidence="1">
    <location>
        <position position="99"/>
    </location>
    <ligand>
        <name>Mg(2+)</name>
        <dbReference type="ChEBI" id="CHEBI:18420"/>
        <label>1</label>
    </ligand>
</feature>
<feature type="binding site" evidence="1">
    <location>
        <position position="99"/>
    </location>
    <ligand>
        <name>Mg(2+)</name>
        <dbReference type="ChEBI" id="CHEBI:18420"/>
        <label>2</label>
    </ligand>
</feature>
<feature type="binding site" evidence="1">
    <location>
        <begin position="101"/>
        <end position="104"/>
    </location>
    <ligand>
        <name>substrate</name>
    </ligand>
</feature>
<feature type="binding site" evidence="1">
    <location>
        <position position="101"/>
    </location>
    <ligand>
        <name>Mg(2+)</name>
        <dbReference type="ChEBI" id="CHEBI:18420"/>
        <label>1</label>
    </ligand>
</feature>
<feature type="binding site" evidence="1">
    <location>
        <position position="102"/>
    </location>
    <ligand>
        <name>Mg(2+)</name>
        <dbReference type="ChEBI" id="CHEBI:18420"/>
        <label>2</label>
    </ligand>
</feature>
<feature type="binding site" evidence="1">
    <location>
        <position position="222"/>
    </location>
    <ligand>
        <name>Mg(2+)</name>
        <dbReference type="ChEBI" id="CHEBI:18420"/>
        <label>2</label>
    </ligand>
</feature>
<feature type="binding site" evidence="1">
    <location>
        <position position="222"/>
    </location>
    <ligand>
        <name>substrate</name>
    </ligand>
</feature>
<gene>
    <name evidence="1" type="primary">cysQ</name>
    <name type="ordered locus">BU561</name>
</gene>
<sequence>MQKINFFDTINNIWRKMLDKICQLARSAGHCIMKLYNSQKFINVSYKPDNTPITDVDYAANNIIKKGLSLISPQIPIISEEESYNFEICRNWNSYWLVDPLDGTKEFLKKNGEFTVNISLIEYGVPILGVIYAPFFDVLYSAFYDNAWKEEKFGSKKKINVAQAEAPLLVISRSHPNETLKNYLEKIKCCKIKKMGSSLKFCLIAEGTAQIYPRFGDTHIWDTAAGHAIVIAAGGKVQTWTGGNLNYSLSSRVSFINSGFYASAL</sequence>
<reference key="1">
    <citation type="journal article" date="2000" name="Nature">
        <title>Genome sequence of the endocellular bacterial symbiont of aphids Buchnera sp. APS.</title>
        <authorList>
            <person name="Shigenobu S."/>
            <person name="Watanabe H."/>
            <person name="Hattori M."/>
            <person name="Sakaki Y."/>
            <person name="Ishikawa H."/>
        </authorList>
    </citation>
    <scope>NUCLEOTIDE SEQUENCE [LARGE SCALE GENOMIC DNA]</scope>
    <source>
        <strain>APS</strain>
    </source>
</reference>
<dbReference type="EC" id="3.1.3.7" evidence="1"/>
<dbReference type="EMBL" id="BA000003">
    <property type="protein sequence ID" value="BAB13251.1"/>
    <property type="molecule type" value="Genomic_DNA"/>
</dbReference>
<dbReference type="RefSeq" id="NP_240365.1">
    <property type="nucleotide sequence ID" value="NC_002528.1"/>
</dbReference>
<dbReference type="SMR" id="P57624"/>
<dbReference type="STRING" id="563178.BUAP5A_554"/>
<dbReference type="EnsemblBacteria" id="BAB13251">
    <property type="protein sequence ID" value="BAB13251"/>
    <property type="gene ID" value="BAB13251"/>
</dbReference>
<dbReference type="KEGG" id="buc:BU561"/>
<dbReference type="PATRIC" id="fig|107806.10.peg.564"/>
<dbReference type="eggNOG" id="COG1218">
    <property type="taxonomic scope" value="Bacteria"/>
</dbReference>
<dbReference type="HOGENOM" id="CLU_044118_3_0_6"/>
<dbReference type="Proteomes" id="UP000001806">
    <property type="component" value="Chromosome"/>
</dbReference>
<dbReference type="GO" id="GO:0005886">
    <property type="term" value="C:plasma membrane"/>
    <property type="evidence" value="ECO:0007669"/>
    <property type="project" value="UniProtKB-SubCell"/>
</dbReference>
<dbReference type="GO" id="GO:0008441">
    <property type="term" value="F:3'(2'),5'-bisphosphate nucleotidase activity"/>
    <property type="evidence" value="ECO:0007669"/>
    <property type="project" value="UniProtKB-UniRule"/>
</dbReference>
<dbReference type="GO" id="GO:0000287">
    <property type="term" value="F:magnesium ion binding"/>
    <property type="evidence" value="ECO:0007669"/>
    <property type="project" value="UniProtKB-UniRule"/>
</dbReference>
<dbReference type="GO" id="GO:0050427">
    <property type="term" value="P:3'-phosphoadenosine 5'-phosphosulfate metabolic process"/>
    <property type="evidence" value="ECO:0007669"/>
    <property type="project" value="TreeGrafter"/>
</dbReference>
<dbReference type="GO" id="GO:0046854">
    <property type="term" value="P:phosphatidylinositol phosphate biosynthetic process"/>
    <property type="evidence" value="ECO:0007669"/>
    <property type="project" value="InterPro"/>
</dbReference>
<dbReference type="GO" id="GO:0000103">
    <property type="term" value="P:sulfate assimilation"/>
    <property type="evidence" value="ECO:0007669"/>
    <property type="project" value="TreeGrafter"/>
</dbReference>
<dbReference type="CDD" id="cd01638">
    <property type="entry name" value="CysQ"/>
    <property type="match status" value="1"/>
</dbReference>
<dbReference type="Gene3D" id="3.40.190.80">
    <property type="match status" value="1"/>
</dbReference>
<dbReference type="Gene3D" id="3.30.540.10">
    <property type="entry name" value="Fructose-1,6-Bisphosphatase, subunit A, domain 1"/>
    <property type="match status" value="1"/>
</dbReference>
<dbReference type="HAMAP" id="MF_02095">
    <property type="entry name" value="CysQ"/>
    <property type="match status" value="1"/>
</dbReference>
<dbReference type="InterPro" id="IPR006240">
    <property type="entry name" value="CysQ"/>
</dbReference>
<dbReference type="InterPro" id="IPR050725">
    <property type="entry name" value="CysQ/Inositol_MonoPase"/>
</dbReference>
<dbReference type="InterPro" id="IPR020583">
    <property type="entry name" value="Inositol_monoP_metal-BS"/>
</dbReference>
<dbReference type="InterPro" id="IPR000760">
    <property type="entry name" value="Inositol_monophosphatase-like"/>
</dbReference>
<dbReference type="InterPro" id="IPR020550">
    <property type="entry name" value="Inositol_monophosphatase_CS"/>
</dbReference>
<dbReference type="NCBIfam" id="TIGR01331">
    <property type="entry name" value="bisphos_cysQ"/>
    <property type="match status" value="1"/>
</dbReference>
<dbReference type="PANTHER" id="PTHR43028">
    <property type="entry name" value="3'(2'),5'-BISPHOSPHATE NUCLEOTIDASE 1"/>
    <property type="match status" value="1"/>
</dbReference>
<dbReference type="PANTHER" id="PTHR43028:SF5">
    <property type="entry name" value="3'(2'),5'-BISPHOSPHATE NUCLEOTIDASE 1"/>
    <property type="match status" value="1"/>
</dbReference>
<dbReference type="Pfam" id="PF00459">
    <property type="entry name" value="Inositol_P"/>
    <property type="match status" value="1"/>
</dbReference>
<dbReference type="PRINTS" id="PR00377">
    <property type="entry name" value="IMPHPHTASES"/>
</dbReference>
<dbReference type="SUPFAM" id="SSF56655">
    <property type="entry name" value="Carbohydrate phosphatase"/>
    <property type="match status" value="1"/>
</dbReference>
<dbReference type="PROSITE" id="PS00629">
    <property type="entry name" value="IMP_1"/>
    <property type="match status" value="1"/>
</dbReference>
<dbReference type="PROSITE" id="PS00630">
    <property type="entry name" value="IMP_2"/>
    <property type="match status" value="1"/>
</dbReference>
<organism>
    <name type="scientific">Buchnera aphidicola subsp. Acyrthosiphon pisum (strain APS)</name>
    <name type="common">Acyrthosiphon pisum symbiotic bacterium</name>
    <dbReference type="NCBI Taxonomy" id="107806"/>
    <lineage>
        <taxon>Bacteria</taxon>
        <taxon>Pseudomonadati</taxon>
        <taxon>Pseudomonadota</taxon>
        <taxon>Gammaproteobacteria</taxon>
        <taxon>Enterobacterales</taxon>
        <taxon>Erwiniaceae</taxon>
        <taxon>Buchnera</taxon>
    </lineage>
</organism>
<keyword id="KW-0997">Cell inner membrane</keyword>
<keyword id="KW-1003">Cell membrane</keyword>
<keyword id="KW-0378">Hydrolase</keyword>
<keyword id="KW-0460">Magnesium</keyword>
<keyword id="KW-0472">Membrane</keyword>
<keyword id="KW-0479">Metal-binding</keyword>
<keyword id="KW-1185">Reference proteome</keyword>
<protein>
    <recommendedName>
        <fullName evidence="1">3'(2'),5'-bisphosphate nucleotidase CysQ</fullName>
        <ecNumber evidence="1">3.1.3.7</ecNumber>
    </recommendedName>
    <alternativeName>
        <fullName evidence="1">3'(2'),5-bisphosphonucleoside 3'(2')-phosphohydrolase</fullName>
    </alternativeName>
    <alternativeName>
        <fullName evidence="1">3'-phosphoadenosine 5'-phosphate phosphatase</fullName>
        <shortName evidence="1">PAP phosphatase</shortName>
    </alternativeName>
</protein>
<accession>P57624</accession>